<accession>P02844</accession>
<accession>Q9W2Z0</accession>
<dbReference type="EMBL" id="AE014298">
    <property type="protein sequence ID" value="AAF46547.3"/>
    <property type="molecule type" value="Genomic_DNA"/>
</dbReference>
<dbReference type="EMBL" id="AY061042">
    <property type="protein sequence ID" value="AAL28590.1"/>
    <property type="molecule type" value="mRNA"/>
</dbReference>
<dbReference type="EMBL" id="X01524">
    <property type="protein sequence ID" value="CAA25710.1"/>
    <property type="molecule type" value="Genomic_DNA"/>
</dbReference>
<dbReference type="PIR" id="A03333">
    <property type="entry name" value="VJFF2"/>
</dbReference>
<dbReference type="RefSeq" id="NP_001285070.1">
    <property type="nucleotide sequence ID" value="NM_001298141.1"/>
</dbReference>
<dbReference type="RefSeq" id="NP_511102.3">
    <property type="nucleotide sequence ID" value="NM_078547.3"/>
</dbReference>
<dbReference type="SMR" id="P02844"/>
<dbReference type="BioGRID" id="58374">
    <property type="interactions" value="34"/>
</dbReference>
<dbReference type="DIP" id="DIP-19994N"/>
<dbReference type="FunCoup" id="P02844">
    <property type="interactions" value="80"/>
</dbReference>
<dbReference type="IntAct" id="P02844">
    <property type="interactions" value="41"/>
</dbReference>
<dbReference type="MINT" id="P02844"/>
<dbReference type="STRING" id="7227.FBpp0308710"/>
<dbReference type="ESTHER" id="drome-2vite">
    <property type="family name" value="Yolk-Protein_dipter"/>
</dbReference>
<dbReference type="iPTMnet" id="P02844"/>
<dbReference type="PaxDb" id="7227-FBpp0071359"/>
<dbReference type="DNASU" id="31938"/>
<dbReference type="EnsemblMetazoa" id="FBtr0071424">
    <property type="protein sequence ID" value="FBpp0071359"/>
    <property type="gene ID" value="FBgn0005391"/>
</dbReference>
<dbReference type="EnsemblMetazoa" id="FBtr0339648">
    <property type="protein sequence ID" value="FBpp0308710"/>
    <property type="gene ID" value="FBgn0005391"/>
</dbReference>
<dbReference type="GeneID" id="31938"/>
<dbReference type="KEGG" id="dme:Dmel_CG2979"/>
<dbReference type="AGR" id="FB:FBgn0005391"/>
<dbReference type="CTD" id="31938"/>
<dbReference type="FlyBase" id="FBgn0005391">
    <property type="gene designation" value="Yp2"/>
</dbReference>
<dbReference type="VEuPathDB" id="VectorBase:FBgn0005391"/>
<dbReference type="eggNOG" id="ENOG502SRF1">
    <property type="taxonomic scope" value="Eukaryota"/>
</dbReference>
<dbReference type="HOGENOM" id="CLU_027171_6_0_1"/>
<dbReference type="InParanoid" id="P02844"/>
<dbReference type="OMA" id="QGDYMLQ"/>
<dbReference type="OrthoDB" id="6770740at2759"/>
<dbReference type="PhylomeDB" id="P02844"/>
<dbReference type="Reactome" id="R-DME-1483166">
    <property type="pathway name" value="Synthesis of PA"/>
</dbReference>
<dbReference type="SignaLink" id="P02844"/>
<dbReference type="BioGRID-ORCS" id="31938">
    <property type="hits" value="0 hits in 1 CRISPR screen"/>
</dbReference>
<dbReference type="ChiTaRS" id="Yp2">
    <property type="organism name" value="fly"/>
</dbReference>
<dbReference type="GenomeRNAi" id="31938"/>
<dbReference type="PRO" id="PR:P02844"/>
<dbReference type="Proteomes" id="UP000000803">
    <property type="component" value="Chromosome X"/>
</dbReference>
<dbReference type="Bgee" id="FBgn0005391">
    <property type="expression patterns" value="Expressed in head capsule and 176 other cell types or tissues"/>
</dbReference>
<dbReference type="ExpressionAtlas" id="P02844">
    <property type="expression patterns" value="baseline and differential"/>
</dbReference>
<dbReference type="GO" id="GO:0005576">
    <property type="term" value="C:extracellular region"/>
    <property type="evidence" value="ECO:0000304"/>
    <property type="project" value="UniProtKB"/>
</dbReference>
<dbReference type="GO" id="GO:0005615">
    <property type="term" value="C:extracellular space"/>
    <property type="evidence" value="ECO:0000318"/>
    <property type="project" value="GO_Central"/>
</dbReference>
<dbReference type="GO" id="GO:0017171">
    <property type="term" value="F:serine hydrolase activity"/>
    <property type="evidence" value="ECO:0007005"/>
    <property type="project" value="FlyBase"/>
</dbReference>
<dbReference type="GO" id="GO:0016042">
    <property type="term" value="P:lipid catabolic process"/>
    <property type="evidence" value="ECO:0000318"/>
    <property type="project" value="GO_Central"/>
</dbReference>
<dbReference type="GO" id="GO:0007548">
    <property type="term" value="P:sex differentiation"/>
    <property type="evidence" value="ECO:0000304"/>
    <property type="project" value="FlyBase"/>
</dbReference>
<dbReference type="FunFam" id="3.40.50.1820:FF:000227">
    <property type="entry name" value="Yolk protein 2"/>
    <property type="match status" value="1"/>
</dbReference>
<dbReference type="Gene3D" id="3.40.50.1820">
    <property type="entry name" value="alpha/beta hydrolase"/>
    <property type="match status" value="1"/>
</dbReference>
<dbReference type="InterPro" id="IPR029058">
    <property type="entry name" value="AB_hydrolase_fold"/>
</dbReference>
<dbReference type="InterPro" id="IPR013818">
    <property type="entry name" value="Lipase"/>
</dbReference>
<dbReference type="InterPro" id="IPR000734">
    <property type="entry name" value="TAG_lipase"/>
</dbReference>
<dbReference type="PANTHER" id="PTHR11610:SF149">
    <property type="entry name" value="FI01450P-RELATED"/>
    <property type="match status" value="1"/>
</dbReference>
<dbReference type="PANTHER" id="PTHR11610">
    <property type="entry name" value="LIPASE"/>
    <property type="match status" value="1"/>
</dbReference>
<dbReference type="Pfam" id="PF00151">
    <property type="entry name" value="Lipase"/>
    <property type="match status" value="1"/>
</dbReference>
<dbReference type="SUPFAM" id="SSF53474">
    <property type="entry name" value="alpha/beta-Hydrolases"/>
    <property type="match status" value="1"/>
</dbReference>
<protein>
    <recommendedName>
        <fullName>Vitellogenin-2</fullName>
    </recommendedName>
    <alternativeName>
        <fullName>Vitellogenin II</fullName>
    </alternativeName>
    <alternativeName>
        <fullName>Yolk protein 2</fullName>
    </alternativeName>
</protein>
<proteinExistence type="evidence at protein level"/>
<feature type="signal peptide" evidence="1">
    <location>
        <begin position="1"/>
        <end position="19"/>
    </location>
</feature>
<feature type="chain" id="PRO_0000017815" description="Vitellogenin-2">
    <location>
        <begin position="20"/>
        <end position="442"/>
    </location>
</feature>
<feature type="region of interest" description="Disordered" evidence="2">
    <location>
        <begin position="21"/>
        <end position="44"/>
    </location>
</feature>
<feature type="region of interest" description="Disordered" evidence="2">
    <location>
        <begin position="165"/>
        <end position="200"/>
    </location>
</feature>
<feature type="region of interest" description="Disordered" evidence="2">
    <location>
        <begin position="408"/>
        <end position="442"/>
    </location>
</feature>
<feature type="compositionally biased region" description="Low complexity" evidence="2">
    <location>
        <begin position="21"/>
        <end position="33"/>
    </location>
</feature>
<feature type="compositionally biased region" description="Polar residues" evidence="2">
    <location>
        <begin position="34"/>
        <end position="44"/>
    </location>
</feature>
<feature type="compositionally biased region" description="Low complexity" evidence="2">
    <location>
        <begin position="175"/>
        <end position="186"/>
    </location>
</feature>
<feature type="compositionally biased region" description="Low complexity" evidence="2">
    <location>
        <begin position="431"/>
        <end position="442"/>
    </location>
</feature>
<feature type="modified residue" description="Phosphoserine" evidence="3">
    <location>
        <position position="31"/>
    </location>
</feature>
<feature type="modified residue" description="Phosphoserine" evidence="3">
    <location>
        <position position="33"/>
    </location>
</feature>
<feature type="modified residue" description="Phosphoserine" evidence="3">
    <location>
        <position position="82"/>
    </location>
</feature>
<feature type="modified residue" description="Phosphothreonine" evidence="3">
    <location>
        <position position="170"/>
    </location>
</feature>
<feature type="modified residue" description="Sulfotyrosine" evidence="4">
    <location>
        <position position="172"/>
    </location>
</feature>
<feature type="modified residue" description="Phosphoserine" evidence="3">
    <location>
        <position position="173"/>
    </location>
</feature>
<feature type="modified residue" description="Phosphoserine" evidence="3">
    <location>
        <position position="178"/>
    </location>
</feature>
<feature type="modified residue" description="Phosphoserine" evidence="3">
    <location>
        <position position="181"/>
    </location>
</feature>
<feature type="modified residue" description="Phosphoserine" evidence="3">
    <location>
        <position position="182"/>
    </location>
</feature>
<feature type="modified residue" description="Phosphoserine" evidence="3">
    <location>
        <position position="183"/>
    </location>
</feature>
<feature type="sequence conflict" description="In Ref. 1." evidence="7" ref="1">
    <original>L</original>
    <variation>M</variation>
    <location>
        <position position="68"/>
    </location>
</feature>
<comment type="function">
    <text evidence="5">Vitellogenin is the major yolk protein of eggs where it is used as a food source during embryogenesis. Vitellogenins and their receptor yl/yolkless are required for maintenance of microtubule plus-end orientation towards the posterior pole of oocytes (PubMed:33891588). Involved in polarized localization of germ plasm components, such as osk mRNA and vas protein, to the oocyte posterior cortex (PubMed:33891588). Receptor-mediated endocytosis by yl/yolkless is crucial for actin reorganization, mediated by osk isoform A/Long, required to anchor germ plasm components to the oocyte cortex (PubMed:33891588).</text>
</comment>
<comment type="subcellular location">
    <subcellularLocation>
        <location>Secreted</location>
    </subcellularLocation>
</comment>
<comment type="tissue specificity">
    <text>Synthesized in the fat body and ovarian follicle cells and accumulate in the oocyte.</text>
</comment>
<comment type="developmental stage">
    <text>Expressed during late pupal development and in adult females between days 1-3.</text>
</comment>
<comment type="induction">
    <text>By beta-ecdysone; in males.</text>
</comment>
<comment type="PTM">
    <text evidence="4 6">Tyrosine sulfation occurs in the female only and plays an essential functional role.</text>
</comment>
<comment type="disruption phenotype">
    <text evidence="5">Viable, even in combination with null mutations in Yp1 and Yp3.</text>
</comment>
<comment type="similarity">
    <text evidence="7">Belongs to the AB hydrolase superfamily. Lipase family.</text>
</comment>
<gene>
    <name type="primary">Yp2</name>
    <name type="ORF">CG2979</name>
</gene>
<keyword id="KW-0903">Direct protein sequencing</keyword>
<keyword id="KW-0597">Phosphoprotein</keyword>
<keyword id="KW-1185">Reference proteome</keyword>
<keyword id="KW-0964">Secreted</keyword>
<keyword id="KW-0732">Signal</keyword>
<keyword id="KW-0765">Sulfation</keyword>
<sequence>MNPLRTLCVMACLLAVAMGNPQSGNRSGRRSNSLDNVEQPSNWVNPREVEELPNLKEVTLKKLQEMSLEEGATLLDKLYHLSQFNHVFKPDYTPEPSQIRGYIVGERGQKIEFNLNTLVEKVKRQQKFGDDEVTIFIQGLPETNTQVQKATRKLVQAYQQRYNLQPYETTDYSNEEQSQRSSSEEQQTQRRKQNGEQDDTKTGDLIVIQLGNAIEDFEQYATLNIERLGEIIGNRLVELTNTVNVPQEIIHLIGSGPAAHVAGVAGRQFTRQTGHKLRRITALDPTKIYGKPEERLTGLARGDADFVDAIHTSAYGMGTSQRLANVDFFPNGPSTGVPGADNVVEATMRATRYFAESVRPGNERNFPSVAASSYQEYKQNKGYGKRGYMGIATDFDLQGDYILQVNSKSPFGRSTPAQKQTGYHQVHQPWRQSSSNQGSRRQ</sequence>
<evidence type="ECO:0000255" key="1"/>
<evidence type="ECO:0000256" key="2">
    <source>
        <dbReference type="SAM" id="MobiDB-lite"/>
    </source>
</evidence>
<evidence type="ECO:0000269" key="3">
    <source>
    </source>
</evidence>
<evidence type="ECO:0000269" key="4">
    <source>
    </source>
</evidence>
<evidence type="ECO:0000269" key="5">
    <source>
    </source>
</evidence>
<evidence type="ECO:0000269" key="6">
    <source>
    </source>
</evidence>
<evidence type="ECO:0000305" key="7"/>
<name>VIT2_DROME</name>
<organism>
    <name type="scientific">Drosophila melanogaster</name>
    <name type="common">Fruit fly</name>
    <dbReference type="NCBI Taxonomy" id="7227"/>
    <lineage>
        <taxon>Eukaryota</taxon>
        <taxon>Metazoa</taxon>
        <taxon>Ecdysozoa</taxon>
        <taxon>Arthropoda</taxon>
        <taxon>Hexapoda</taxon>
        <taxon>Insecta</taxon>
        <taxon>Pterygota</taxon>
        <taxon>Neoptera</taxon>
        <taxon>Endopterygota</taxon>
        <taxon>Diptera</taxon>
        <taxon>Brachycera</taxon>
        <taxon>Muscomorpha</taxon>
        <taxon>Ephydroidea</taxon>
        <taxon>Drosophilidae</taxon>
        <taxon>Drosophila</taxon>
        <taxon>Sophophora</taxon>
    </lineage>
</organism>
<reference key="1">
    <citation type="journal article" date="1983" name="J. Mol. Biol.">
        <title>Sequence and structure conservation in yolk proteins and their genes.</title>
        <authorList>
            <person name="Hung M.-C."/>
            <person name="Wensink P.C."/>
        </authorList>
    </citation>
    <scope>NUCLEOTIDE SEQUENCE [GENOMIC DNA]</scope>
    <source>
        <strain>Canton-S</strain>
    </source>
</reference>
<reference key="2">
    <citation type="journal article" date="2000" name="Science">
        <title>The genome sequence of Drosophila melanogaster.</title>
        <authorList>
            <person name="Adams M.D."/>
            <person name="Celniker S.E."/>
            <person name="Holt R.A."/>
            <person name="Evans C.A."/>
            <person name="Gocayne J.D."/>
            <person name="Amanatides P.G."/>
            <person name="Scherer S.E."/>
            <person name="Li P.W."/>
            <person name="Hoskins R.A."/>
            <person name="Galle R.F."/>
            <person name="George R.A."/>
            <person name="Lewis S.E."/>
            <person name="Richards S."/>
            <person name="Ashburner M."/>
            <person name="Henderson S.N."/>
            <person name="Sutton G.G."/>
            <person name="Wortman J.R."/>
            <person name="Yandell M.D."/>
            <person name="Zhang Q."/>
            <person name="Chen L.X."/>
            <person name="Brandon R.C."/>
            <person name="Rogers Y.-H.C."/>
            <person name="Blazej R.G."/>
            <person name="Champe M."/>
            <person name="Pfeiffer B.D."/>
            <person name="Wan K.H."/>
            <person name="Doyle C."/>
            <person name="Baxter E.G."/>
            <person name="Helt G."/>
            <person name="Nelson C.R."/>
            <person name="Miklos G.L.G."/>
            <person name="Abril J.F."/>
            <person name="Agbayani A."/>
            <person name="An H.-J."/>
            <person name="Andrews-Pfannkoch C."/>
            <person name="Baldwin D."/>
            <person name="Ballew R.M."/>
            <person name="Basu A."/>
            <person name="Baxendale J."/>
            <person name="Bayraktaroglu L."/>
            <person name="Beasley E.M."/>
            <person name="Beeson K.Y."/>
            <person name="Benos P.V."/>
            <person name="Berman B.P."/>
            <person name="Bhandari D."/>
            <person name="Bolshakov S."/>
            <person name="Borkova D."/>
            <person name="Botchan M.R."/>
            <person name="Bouck J."/>
            <person name="Brokstein P."/>
            <person name="Brottier P."/>
            <person name="Burtis K.C."/>
            <person name="Busam D.A."/>
            <person name="Butler H."/>
            <person name="Cadieu E."/>
            <person name="Center A."/>
            <person name="Chandra I."/>
            <person name="Cherry J.M."/>
            <person name="Cawley S."/>
            <person name="Dahlke C."/>
            <person name="Davenport L.B."/>
            <person name="Davies P."/>
            <person name="de Pablos B."/>
            <person name="Delcher A."/>
            <person name="Deng Z."/>
            <person name="Mays A.D."/>
            <person name="Dew I."/>
            <person name="Dietz S.M."/>
            <person name="Dodson K."/>
            <person name="Doup L.E."/>
            <person name="Downes M."/>
            <person name="Dugan-Rocha S."/>
            <person name="Dunkov B.C."/>
            <person name="Dunn P."/>
            <person name="Durbin K.J."/>
            <person name="Evangelista C.C."/>
            <person name="Ferraz C."/>
            <person name="Ferriera S."/>
            <person name="Fleischmann W."/>
            <person name="Fosler C."/>
            <person name="Gabrielian A.E."/>
            <person name="Garg N.S."/>
            <person name="Gelbart W.M."/>
            <person name="Glasser K."/>
            <person name="Glodek A."/>
            <person name="Gong F."/>
            <person name="Gorrell J.H."/>
            <person name="Gu Z."/>
            <person name="Guan P."/>
            <person name="Harris M."/>
            <person name="Harris N.L."/>
            <person name="Harvey D.A."/>
            <person name="Heiman T.J."/>
            <person name="Hernandez J.R."/>
            <person name="Houck J."/>
            <person name="Hostin D."/>
            <person name="Houston K.A."/>
            <person name="Howland T.J."/>
            <person name="Wei M.-H."/>
            <person name="Ibegwam C."/>
            <person name="Jalali M."/>
            <person name="Kalush F."/>
            <person name="Karpen G.H."/>
            <person name="Ke Z."/>
            <person name="Kennison J.A."/>
            <person name="Ketchum K.A."/>
            <person name="Kimmel B.E."/>
            <person name="Kodira C.D."/>
            <person name="Kraft C.L."/>
            <person name="Kravitz S."/>
            <person name="Kulp D."/>
            <person name="Lai Z."/>
            <person name="Lasko P."/>
            <person name="Lei Y."/>
            <person name="Levitsky A.A."/>
            <person name="Li J.H."/>
            <person name="Li Z."/>
            <person name="Liang Y."/>
            <person name="Lin X."/>
            <person name="Liu X."/>
            <person name="Mattei B."/>
            <person name="McIntosh T.C."/>
            <person name="McLeod M.P."/>
            <person name="McPherson D."/>
            <person name="Merkulov G."/>
            <person name="Milshina N.V."/>
            <person name="Mobarry C."/>
            <person name="Morris J."/>
            <person name="Moshrefi A."/>
            <person name="Mount S.M."/>
            <person name="Moy M."/>
            <person name="Murphy B."/>
            <person name="Murphy L."/>
            <person name="Muzny D.M."/>
            <person name="Nelson D.L."/>
            <person name="Nelson D.R."/>
            <person name="Nelson K.A."/>
            <person name="Nixon K."/>
            <person name="Nusskern D.R."/>
            <person name="Pacleb J.M."/>
            <person name="Palazzolo M."/>
            <person name="Pittman G.S."/>
            <person name="Pan S."/>
            <person name="Pollard J."/>
            <person name="Puri V."/>
            <person name="Reese M.G."/>
            <person name="Reinert K."/>
            <person name="Remington K."/>
            <person name="Saunders R.D.C."/>
            <person name="Scheeler F."/>
            <person name="Shen H."/>
            <person name="Shue B.C."/>
            <person name="Siden-Kiamos I."/>
            <person name="Simpson M."/>
            <person name="Skupski M.P."/>
            <person name="Smith T.J."/>
            <person name="Spier E."/>
            <person name="Spradling A.C."/>
            <person name="Stapleton M."/>
            <person name="Strong R."/>
            <person name="Sun E."/>
            <person name="Svirskas R."/>
            <person name="Tector C."/>
            <person name="Turner R."/>
            <person name="Venter E."/>
            <person name="Wang A.H."/>
            <person name="Wang X."/>
            <person name="Wang Z.-Y."/>
            <person name="Wassarman D.A."/>
            <person name="Weinstock G.M."/>
            <person name="Weissenbach J."/>
            <person name="Williams S.M."/>
            <person name="Woodage T."/>
            <person name="Worley K.C."/>
            <person name="Wu D."/>
            <person name="Yang S."/>
            <person name="Yao Q.A."/>
            <person name="Ye J."/>
            <person name="Yeh R.-F."/>
            <person name="Zaveri J.S."/>
            <person name="Zhan M."/>
            <person name="Zhang G."/>
            <person name="Zhao Q."/>
            <person name="Zheng L."/>
            <person name="Zheng X.H."/>
            <person name="Zhong F.N."/>
            <person name="Zhong W."/>
            <person name="Zhou X."/>
            <person name="Zhu S.C."/>
            <person name="Zhu X."/>
            <person name="Smith H.O."/>
            <person name="Gibbs R.A."/>
            <person name="Myers E.W."/>
            <person name="Rubin G.M."/>
            <person name="Venter J.C."/>
        </authorList>
    </citation>
    <scope>NUCLEOTIDE SEQUENCE [LARGE SCALE GENOMIC DNA]</scope>
    <source>
        <strain>Berkeley</strain>
    </source>
</reference>
<reference key="3">
    <citation type="journal article" date="2002" name="Genome Biol.">
        <title>Annotation of the Drosophila melanogaster euchromatic genome: a systematic review.</title>
        <authorList>
            <person name="Misra S."/>
            <person name="Crosby M.A."/>
            <person name="Mungall C.J."/>
            <person name="Matthews B.B."/>
            <person name="Campbell K.S."/>
            <person name="Hradecky P."/>
            <person name="Huang Y."/>
            <person name="Kaminker J.S."/>
            <person name="Millburn G.H."/>
            <person name="Prochnik S.E."/>
            <person name="Smith C.D."/>
            <person name="Tupy J.L."/>
            <person name="Whitfield E.J."/>
            <person name="Bayraktaroglu L."/>
            <person name="Berman B.P."/>
            <person name="Bettencourt B.R."/>
            <person name="Celniker S.E."/>
            <person name="de Grey A.D.N.J."/>
            <person name="Drysdale R.A."/>
            <person name="Harris N.L."/>
            <person name="Richter J."/>
            <person name="Russo S."/>
            <person name="Schroeder A.J."/>
            <person name="Shu S.Q."/>
            <person name="Stapleton M."/>
            <person name="Yamada C."/>
            <person name="Ashburner M."/>
            <person name="Gelbart W.M."/>
            <person name="Rubin G.M."/>
            <person name="Lewis S.E."/>
        </authorList>
    </citation>
    <scope>GENOME REANNOTATION</scope>
    <source>
        <strain>Berkeley</strain>
    </source>
</reference>
<reference key="4">
    <citation type="journal article" date="2002" name="Genome Biol.">
        <title>A Drosophila full-length cDNA resource.</title>
        <authorList>
            <person name="Stapleton M."/>
            <person name="Carlson J.W."/>
            <person name="Brokstein P."/>
            <person name="Yu C."/>
            <person name="Champe M."/>
            <person name="George R.A."/>
            <person name="Guarin H."/>
            <person name="Kronmiller B."/>
            <person name="Pacleb J.M."/>
            <person name="Park S."/>
            <person name="Wan K.H."/>
            <person name="Rubin G.M."/>
            <person name="Celniker S.E."/>
        </authorList>
    </citation>
    <scope>NUCLEOTIDE SEQUENCE [LARGE SCALE MRNA]</scope>
    <source>
        <strain>Berkeley</strain>
        <tissue>Head</tissue>
    </source>
</reference>
<reference key="5">
    <citation type="journal article" date="1982" name="Nucleic Acids Res.">
        <title>Vitellogenin in Drosophila melanogaster: a comparison of the YPI and YPII genes and their transcription products.</title>
        <authorList>
            <person name="Hovemann B."/>
            <person name="Galler R."/>
        </authorList>
    </citation>
    <scope>NUCLEOTIDE SEQUENCE [GENOMIC DNA] OF 1-59</scope>
</reference>
<reference key="6">
    <citation type="journal article" date="1988" name="J. Biol. Chem.">
        <title>Purification of yolk protein 2 of Drosophila melanogaster and identification of its site of tyrosine sulfation.</title>
        <authorList>
            <person name="Baeuerle P.A."/>
            <person name="Lottspeich F."/>
            <person name="Huttner W.B."/>
        </authorList>
    </citation>
    <scope>PROTEIN SEQUENCE OF 168-176</scope>
    <scope>SULFATION AT TYR-172</scope>
</reference>
<reference key="7">
    <citation type="journal article" date="1985" name="J. Biol. Chem.">
        <title>Tyrosine sulfation of yolk proteins 1, 2, and 3 in Drosophila melanogaster.</title>
        <authorList>
            <person name="Baeuerle P.A."/>
            <person name="Huttner W.B."/>
        </authorList>
    </citation>
    <scope>SULFATION</scope>
</reference>
<reference key="8">
    <citation type="journal article" date="2008" name="J. Proteome Res.">
        <title>Phosphoproteome analysis of Drosophila melanogaster embryos.</title>
        <authorList>
            <person name="Zhai B."/>
            <person name="Villen J."/>
            <person name="Beausoleil S.A."/>
            <person name="Mintseris J."/>
            <person name="Gygi S.P."/>
        </authorList>
    </citation>
    <scope>PHOSPHORYLATION [LARGE SCALE ANALYSIS] AT SER-31; SER-33; SER-82; THR-170; SER-173; SER-178; SER-181; SER-182 AND SER-183</scope>
    <scope>IDENTIFICATION BY MASS SPECTROMETRY</scope>
    <source>
        <tissue>Embryo</tissue>
    </source>
</reference>
<reference key="9">
    <citation type="journal article" date="2021" name="PLoS Biol.">
        <title>Receptor-mediated yolk uptake is required for oskar mRNA localization and cortical anchorage of germ plasm components in the Drosophila oocyte.</title>
        <authorList>
            <person name="Tanaka T."/>
            <person name="Tani N."/>
            <person name="Nakamura A."/>
        </authorList>
    </citation>
    <scope>FUNCTION</scope>
    <scope>DISRUPTION PHENOTYPE</scope>
</reference>